<keyword id="KW-0324">Glycolysis</keyword>
<keyword id="KW-0413">Isomerase</keyword>
<keyword id="KW-0460">Magnesium</keyword>
<keyword id="KW-1185">Reference proteome</keyword>
<name>APGM_PYRFU</name>
<comment type="function">
    <text evidence="1">Catalyzes the interconversion of 2-phosphoglycerate and 3-phosphoglycerate.</text>
</comment>
<comment type="catalytic activity">
    <reaction evidence="1">
        <text>(2R)-2-phosphoglycerate = (2R)-3-phosphoglycerate</text>
        <dbReference type="Rhea" id="RHEA:15901"/>
        <dbReference type="ChEBI" id="CHEBI:58272"/>
        <dbReference type="ChEBI" id="CHEBI:58289"/>
        <dbReference type="EC" id="5.4.2.12"/>
    </reaction>
</comment>
<comment type="cofactor">
    <cofactor evidence="3">
        <name>Mg(2+)</name>
        <dbReference type="ChEBI" id="CHEBI:18420"/>
    </cofactor>
</comment>
<comment type="activity regulation">
    <text evidence="1">Inhibited to approximately 20% by EDTA.</text>
</comment>
<comment type="biophysicochemical properties">
    <phDependence>
        <text evidence="1">Optimum pH is 8.0.</text>
    </phDependence>
</comment>
<comment type="pathway">
    <text evidence="1">Carbohydrate degradation; glycolysis; pyruvate from D-glyceraldehyde 3-phosphate: step 3/5.</text>
</comment>
<comment type="subunit">
    <text evidence="3">Homotetramer.</text>
</comment>
<comment type="similarity">
    <text evidence="2">Belongs to the BPG-independent phosphoglycerate mutase family. A-PGAM subfamily.</text>
</comment>
<gene>
    <name type="primary">apgM</name>
    <name type="ordered locus">PF1959</name>
</gene>
<accession>P58814</accession>
<evidence type="ECO:0000269" key="1">
    <source>
    </source>
</evidence>
<evidence type="ECO:0000305" key="2"/>
<evidence type="ECO:0000305" key="3">
    <source>
    </source>
</evidence>
<organism>
    <name type="scientific">Pyrococcus furiosus (strain ATCC 43587 / DSM 3638 / JCM 8422 / Vc1)</name>
    <dbReference type="NCBI Taxonomy" id="186497"/>
    <lineage>
        <taxon>Archaea</taxon>
        <taxon>Methanobacteriati</taxon>
        <taxon>Methanobacteriota</taxon>
        <taxon>Thermococci</taxon>
        <taxon>Thermococcales</taxon>
        <taxon>Thermococcaceae</taxon>
        <taxon>Pyrococcus</taxon>
    </lineage>
</organism>
<protein>
    <recommendedName>
        <fullName>2,3-bisphosphoglycerate-independent phosphoglycerate mutase</fullName>
        <shortName>BPG-independent PGAM</shortName>
        <shortName>Phosphoglyceromutase</shortName>
        <shortName>aPGAM</shortName>
        <ecNumber>5.4.2.12</ecNumber>
    </recommendedName>
</protein>
<dbReference type="EC" id="5.4.2.12"/>
<dbReference type="EMBL" id="AE009950">
    <property type="protein sequence ID" value="AAL82083.1"/>
    <property type="molecule type" value="Genomic_DNA"/>
</dbReference>
<dbReference type="RefSeq" id="WP_011013101.1">
    <property type="nucleotide sequence ID" value="NZ_CP023154.1"/>
</dbReference>
<dbReference type="SMR" id="P58814"/>
<dbReference type="STRING" id="186497.PF1959"/>
<dbReference type="PaxDb" id="186497-PF1959"/>
<dbReference type="KEGG" id="pfu:PF1959"/>
<dbReference type="PATRIC" id="fig|186497.12.peg.2032"/>
<dbReference type="eggNOG" id="arCOG01696">
    <property type="taxonomic scope" value="Archaea"/>
</dbReference>
<dbReference type="HOGENOM" id="CLU_034906_2_0_2"/>
<dbReference type="OrthoDB" id="52918at2157"/>
<dbReference type="PhylomeDB" id="P58814"/>
<dbReference type="UniPathway" id="UPA00109">
    <property type="reaction ID" value="UER00186"/>
</dbReference>
<dbReference type="Proteomes" id="UP000001013">
    <property type="component" value="Chromosome"/>
</dbReference>
<dbReference type="GO" id="GO:0046872">
    <property type="term" value="F:metal ion binding"/>
    <property type="evidence" value="ECO:0007669"/>
    <property type="project" value="InterPro"/>
</dbReference>
<dbReference type="GO" id="GO:0004619">
    <property type="term" value="F:phosphoglycerate mutase activity"/>
    <property type="evidence" value="ECO:0007669"/>
    <property type="project" value="UniProtKB-EC"/>
</dbReference>
<dbReference type="GO" id="GO:0006096">
    <property type="term" value="P:glycolytic process"/>
    <property type="evidence" value="ECO:0007669"/>
    <property type="project" value="UniProtKB-UniRule"/>
</dbReference>
<dbReference type="CDD" id="cd16011">
    <property type="entry name" value="iPGM_like"/>
    <property type="match status" value="1"/>
</dbReference>
<dbReference type="Gene3D" id="3.40.720.10">
    <property type="entry name" value="Alkaline Phosphatase, subunit A"/>
    <property type="match status" value="2"/>
</dbReference>
<dbReference type="Gene3D" id="3.30.70.2130">
    <property type="entry name" value="Metalloenzyme domain"/>
    <property type="match status" value="1"/>
</dbReference>
<dbReference type="HAMAP" id="MF_01402_A">
    <property type="entry name" value="ApgM_A"/>
    <property type="match status" value="1"/>
</dbReference>
<dbReference type="InterPro" id="IPR017850">
    <property type="entry name" value="Alkaline_phosphatase_core_sf"/>
</dbReference>
<dbReference type="InterPro" id="IPR023665">
    <property type="entry name" value="ApgAM_prokaryotes"/>
</dbReference>
<dbReference type="InterPro" id="IPR006124">
    <property type="entry name" value="Metalloenzyme"/>
</dbReference>
<dbReference type="InterPro" id="IPR004456">
    <property type="entry name" value="Pglycerate_mutase_ApgM"/>
</dbReference>
<dbReference type="InterPro" id="IPR042253">
    <property type="entry name" value="Pglycerate_mutase_ApgM_sf"/>
</dbReference>
<dbReference type="NCBIfam" id="TIGR00306">
    <property type="entry name" value="apgM"/>
    <property type="match status" value="1"/>
</dbReference>
<dbReference type="NCBIfam" id="NF003104">
    <property type="entry name" value="PRK04024.1"/>
    <property type="match status" value="1"/>
</dbReference>
<dbReference type="PANTHER" id="PTHR31209">
    <property type="entry name" value="COFACTOR-INDEPENDENT PHOSPHOGLYCERATE MUTASE"/>
    <property type="match status" value="1"/>
</dbReference>
<dbReference type="PANTHER" id="PTHR31209:SF0">
    <property type="entry name" value="METALLOENZYME DOMAIN-CONTAINING PROTEIN"/>
    <property type="match status" value="1"/>
</dbReference>
<dbReference type="Pfam" id="PF01676">
    <property type="entry name" value="Metalloenzyme"/>
    <property type="match status" value="1"/>
</dbReference>
<dbReference type="Pfam" id="PF10143">
    <property type="entry name" value="PhosphMutase"/>
    <property type="match status" value="1"/>
</dbReference>
<dbReference type="PIRSF" id="PIRSF006392">
    <property type="entry name" value="IPGAM_arch"/>
    <property type="match status" value="1"/>
</dbReference>
<dbReference type="SUPFAM" id="SSF53649">
    <property type="entry name" value="Alkaline phosphatase-like"/>
    <property type="match status" value="1"/>
</dbReference>
<feature type="chain" id="PRO_0000138144" description="2,3-bisphosphoglycerate-independent phosphoglycerate mutase">
    <location>
        <begin position="1"/>
        <end position="411"/>
    </location>
</feature>
<sequence length="411" mass="45314">MKQRKGVLIILDGLGDRPIKELGGKTPLEYANTPTMDYLAKIGILGQQDPIKPGQPAGSDTAHLSIFGYDPYKSYRGRGYFEALGVGLELDEDDLAFRVNFATLENGVITDRRAGRISTEEAHELAKAIQENVDIPVDFIFKGATGHRAVLVLKGMAEGYKVGENDPHEAGKPPHPFTWEDEASKKVAEILEEFVKKAHEVLDKHPINEKRRKEGKPVANYLLIRGAGTYPNIPMKFTEQWKVKAAAVVAVALVKGVAKAIGFDVYTPKGATGEYNTDEMAKARKAVELLKDYDFVFIHFKPTDAAGHDNNPKLKAELIERADRMIKYIVDHVDLEDVVIAITGDHSTPCEVMNHSGDPVPLLIAGGGVRADYTEKFGEREAMRGGLGRIRGHDIVPIMMDLMNRTEKFGA</sequence>
<proteinExistence type="evidence at protein level"/>
<reference key="1">
    <citation type="journal article" date="1999" name="Genetics">
        <title>Divergence of the hyperthermophilic archaea Pyrococcus furiosus and P. horikoshii inferred from complete genomic sequences.</title>
        <authorList>
            <person name="Maeder D.L."/>
            <person name="Weiss R.B."/>
            <person name="Dunn D.M."/>
            <person name="Cherry J.L."/>
            <person name="Gonzalez J.M."/>
            <person name="DiRuggiero J."/>
            <person name="Robb F.T."/>
        </authorList>
    </citation>
    <scope>NUCLEOTIDE SEQUENCE [LARGE SCALE GENOMIC DNA]</scope>
    <source>
        <strain>ATCC 43587 / DSM 3638 / JCM 8422 / Vc1</strain>
    </source>
</reference>
<reference key="2">
    <citation type="journal article" date="2002" name="FEMS Microbiol. Lett.">
        <title>Molecular characterization of phosphoglycerate mutase in archaea.</title>
        <authorList>
            <person name="van der Oost J."/>
            <person name="Huynen M.A."/>
            <person name="Verhees C.H."/>
        </authorList>
    </citation>
    <scope>FUNCTION</scope>
    <scope>CATALYTIC ACTIVITY</scope>
    <scope>COFACTOR</scope>
    <scope>ACTIVITY REGULATION</scope>
    <scope>BIOPHYSICOCHEMICAL PROPERTIES</scope>
    <scope>PATHWAY</scope>
    <scope>SUBUNIT</scope>
    <source>
        <strain>ATCC 43587 / DSM 3638 / JCM 8422 / Vc1</strain>
    </source>
</reference>